<protein>
    <recommendedName>
        <fullName evidence="1">PTS system glucitol/sorbitol-specific EIIC component</fullName>
    </recommendedName>
    <alternativeName>
        <fullName evidence="1">EIIC-Gut</fullName>
    </alternativeName>
    <alternativeName>
        <fullName evidence="1">Glucitol/sorbitol permease IIC component</fullName>
    </alternativeName>
</protein>
<feature type="chain" id="PRO_0000186567" description="PTS system glucitol/sorbitol-specific EIIC component">
    <location>
        <begin position="1"/>
        <end position="182"/>
    </location>
</feature>
<feature type="transmembrane region" description="Helical" evidence="2">
    <location>
        <begin position="28"/>
        <end position="48"/>
    </location>
</feature>
<feature type="transmembrane region" description="Helical" evidence="2">
    <location>
        <begin position="63"/>
        <end position="83"/>
    </location>
</feature>
<feature type="transmembrane region" description="Helical" evidence="2">
    <location>
        <begin position="139"/>
        <end position="159"/>
    </location>
</feature>
<feature type="domain" description="PTS EIIC type-5" evidence="2">
    <location>
        <begin position="1"/>
        <end position="182"/>
    </location>
</feature>
<reference key="1">
    <citation type="journal article" date="1998" name="Appl. Environ. Microbiol.">
        <title>A gene system for glucitol transport and metabolism in Clostridium beijerinckii NCIMB 8052.</title>
        <authorList>
            <person name="Tangney M."/>
            <person name="Brehm J.K."/>
            <person name="Minton N.P."/>
            <person name="Mitchell W.J."/>
        </authorList>
    </citation>
    <scope>NUCLEOTIDE SEQUENCE [GENOMIC DNA]</scope>
    <scope>FUNCTION</scope>
    <scope>INDUCTION</scope>
</reference>
<reference key="2">
    <citation type="submission" date="2007-06" db="EMBL/GenBank/DDBJ databases">
        <title>Complete sequence of Clostridium beijerinckii NCIMB 8052.</title>
        <authorList>
            <consortium name="US DOE Joint Genome Institute"/>
            <person name="Copeland A."/>
            <person name="Lucas S."/>
            <person name="Lapidus A."/>
            <person name="Barry K."/>
            <person name="Detter J.C."/>
            <person name="Glavina del Rio T."/>
            <person name="Hammon N."/>
            <person name="Israni S."/>
            <person name="Dalin E."/>
            <person name="Tice H."/>
            <person name="Pitluck S."/>
            <person name="Sims D."/>
            <person name="Brettin T."/>
            <person name="Bruce D."/>
            <person name="Tapia R."/>
            <person name="Brainard J."/>
            <person name="Schmutz J."/>
            <person name="Larimer F."/>
            <person name="Land M."/>
            <person name="Hauser L."/>
            <person name="Kyrpides N."/>
            <person name="Mikhailova N."/>
            <person name="Bennet G."/>
            <person name="Cann I."/>
            <person name="Chen J.-S."/>
            <person name="Contreras A.L."/>
            <person name="Jones D."/>
            <person name="Kashket E."/>
            <person name="Mitchell W."/>
            <person name="Stoddard S."/>
            <person name="Schwarz W."/>
            <person name="Qureshi N."/>
            <person name="Young M."/>
            <person name="Shi Z."/>
            <person name="Ezeji T."/>
            <person name="White B."/>
            <person name="Blaschek H."/>
            <person name="Richardson P."/>
        </authorList>
    </citation>
    <scope>NUCLEOTIDE SEQUENCE [LARGE SCALE GENOMIC DNA]</scope>
    <source>
        <strain>ATCC 51743 / NCIMB 8052</strain>
    </source>
</reference>
<proteinExistence type="evidence at transcript level"/>
<evidence type="ECO:0000250" key="1">
    <source>
        <dbReference type="UniProtKB" id="P56579"/>
    </source>
</evidence>
<evidence type="ECO:0000255" key="2">
    <source>
        <dbReference type="PROSITE-ProRule" id="PRU00430"/>
    </source>
</evidence>
<evidence type="ECO:0000269" key="3">
    <source>
    </source>
</evidence>
<evidence type="ECO:0000305" key="4">
    <source>
    </source>
</evidence>
<comment type="function">
    <text evidence="4">The phosphoenolpyruvate-dependent sugar phosphotransferase system (PTS), a major carbohydrate active transport system, catalyzes the phosphorylation of incoming sugar substrates concomitant with their translocation across the cell membrane. The enzyme II complex composed of SrlA, SrlB and SrlE is involved in glucitol/sorbitol transport.</text>
</comment>
<comment type="subcellular location">
    <subcellularLocation>
        <location evidence="2">Cell membrane</location>
        <topology evidence="2">Multi-pass membrane protein</topology>
    </subcellularLocation>
</comment>
<comment type="induction">
    <text evidence="3">Activated by sorbitol and repressed by glucose.</text>
</comment>
<comment type="domain">
    <text evidence="2">The EIIC domain forms the PTS system translocation channel and contains the specific substrate-binding site.</text>
</comment>
<gene>
    <name type="primary">srlA</name>
    <name type="synonym">gutA1</name>
    <name type="ordered locus">Cbei_0336</name>
</gene>
<organism>
    <name type="scientific">Clostridium beijerinckii (strain ATCC 51743 / NCIMB 8052)</name>
    <name type="common">Clostridium acetobutylicum</name>
    <dbReference type="NCBI Taxonomy" id="290402"/>
    <lineage>
        <taxon>Bacteria</taxon>
        <taxon>Bacillati</taxon>
        <taxon>Bacillota</taxon>
        <taxon>Clostridia</taxon>
        <taxon>Eubacteriales</taxon>
        <taxon>Clostridiaceae</taxon>
        <taxon>Clostridium</taxon>
    </lineage>
</organism>
<sequence length="182" mass="20185">MDAIVYFAKGFMYLFEVGGNTFVSWVTGIIPKVLLLLVFMNSIIAFIGQDKVDRFAKFASRNVILAYGVLPFLSAFMLGNPMALSMGKFLPERMKPSYYASASYHCHTNSGIFPHINVGEIFIYLGIANGITTLGLDPTALGLRYLLVGLVMNFFAGWVTDFTTKIVMRQQGIELSNQLKAN</sequence>
<dbReference type="EMBL" id="AJ002527">
    <property type="protein sequence ID" value="CAA05513.1"/>
    <property type="molecule type" value="Genomic_DNA"/>
</dbReference>
<dbReference type="EMBL" id="CP000721">
    <property type="protein sequence ID" value="ABR32524.1"/>
    <property type="molecule type" value="Genomic_DNA"/>
</dbReference>
<dbReference type="RefSeq" id="WP_011967685.1">
    <property type="nucleotide sequence ID" value="NC_009617.1"/>
</dbReference>
<dbReference type="TCDB" id="4.A.4.1.2">
    <property type="family name" value="the pts glucitol (gut) family"/>
</dbReference>
<dbReference type="GeneID" id="66343213"/>
<dbReference type="KEGG" id="cbe:Cbei_0336"/>
<dbReference type="eggNOG" id="COG3730">
    <property type="taxonomic scope" value="Bacteria"/>
</dbReference>
<dbReference type="HOGENOM" id="CLU_093147_0_0_9"/>
<dbReference type="Proteomes" id="UP000000565">
    <property type="component" value="Chromosome"/>
</dbReference>
<dbReference type="GO" id="GO:0005886">
    <property type="term" value="C:plasma membrane"/>
    <property type="evidence" value="ECO:0007669"/>
    <property type="project" value="UniProtKB-SubCell"/>
</dbReference>
<dbReference type="GO" id="GO:0009401">
    <property type="term" value="P:phosphoenolpyruvate-dependent sugar phosphotransferase system"/>
    <property type="evidence" value="ECO:0007669"/>
    <property type="project" value="UniProtKB-KW"/>
</dbReference>
<dbReference type="InterPro" id="IPR004699">
    <property type="entry name" value="PTS_IID_sorb"/>
</dbReference>
<dbReference type="NCBIfam" id="TIGR00821">
    <property type="entry name" value="EII-GUT"/>
    <property type="match status" value="1"/>
</dbReference>
<dbReference type="PANTHER" id="PTHR40399">
    <property type="entry name" value="PTS SYSTEM GLUCITOL/SORBITOL-SPECIFIC EIIC COMPONENT"/>
    <property type="match status" value="1"/>
</dbReference>
<dbReference type="PANTHER" id="PTHR40399:SF1">
    <property type="entry name" value="PTS SYSTEM GLUCITOL_SORBITOL-SPECIFIC EIIC COMPONENT"/>
    <property type="match status" value="1"/>
</dbReference>
<dbReference type="Pfam" id="PF03608">
    <property type="entry name" value="EII-GUT"/>
    <property type="match status" value="1"/>
</dbReference>
<dbReference type="PIRSF" id="PIRSF038321">
    <property type="entry name" value="PTS_glc_srb_IIC"/>
    <property type="match status" value="1"/>
</dbReference>
<dbReference type="PROSITE" id="PS51107">
    <property type="entry name" value="PTS_EIIC_TYPE_5"/>
    <property type="match status" value="1"/>
</dbReference>
<accession>O32332</accession>
<accession>A6LQ94</accession>
<name>PTHC_CLOB8</name>
<keyword id="KW-1003">Cell membrane</keyword>
<keyword id="KW-0472">Membrane</keyword>
<keyword id="KW-0598">Phosphotransferase system</keyword>
<keyword id="KW-0762">Sugar transport</keyword>
<keyword id="KW-0812">Transmembrane</keyword>
<keyword id="KW-1133">Transmembrane helix</keyword>
<keyword id="KW-0813">Transport</keyword>